<accession>Q5KSL6</accession>
<accession>B2RP91</accession>
<organism>
    <name type="scientific">Homo sapiens</name>
    <name type="common">Human</name>
    <dbReference type="NCBI Taxonomy" id="9606"/>
    <lineage>
        <taxon>Eukaryota</taxon>
        <taxon>Metazoa</taxon>
        <taxon>Chordata</taxon>
        <taxon>Craniata</taxon>
        <taxon>Vertebrata</taxon>
        <taxon>Euteleostomi</taxon>
        <taxon>Mammalia</taxon>
        <taxon>Eutheria</taxon>
        <taxon>Euarchontoglires</taxon>
        <taxon>Primates</taxon>
        <taxon>Haplorrhini</taxon>
        <taxon>Catarrhini</taxon>
        <taxon>Hominidae</taxon>
        <taxon>Homo</taxon>
    </lineage>
</organism>
<keyword id="KW-0067">ATP-binding</keyword>
<keyword id="KW-1003">Cell membrane</keyword>
<keyword id="KW-0418">Kinase</keyword>
<keyword id="KW-0443">Lipid metabolism</keyword>
<keyword id="KW-0472">Membrane</keyword>
<keyword id="KW-0479">Metal-binding</keyword>
<keyword id="KW-0547">Nucleotide-binding</keyword>
<keyword id="KW-0597">Phosphoprotein</keyword>
<keyword id="KW-1267">Proteomics identification</keyword>
<keyword id="KW-1185">Reference proteome</keyword>
<keyword id="KW-0677">Repeat</keyword>
<keyword id="KW-0808">Transferase</keyword>
<keyword id="KW-0862">Zinc</keyword>
<keyword id="KW-0863">Zinc-finger</keyword>
<comment type="function">
    <text evidence="5 6 8">Diacylglycerol kinase that converts diacylglycerol/DAG into phosphatidic acid/phosphatidate/PA and regulates the respective levels of these two bioactive lipids (PubMed:16210324, PubMed:23949095). Thereby, acts as a central switch between the signaling pathways activated by these second messengers with different cellular targets and opposite effects in numerous biological processes (Probable).</text>
</comment>
<comment type="catalytic activity">
    <reaction evidence="5 6">
        <text>a 1,2-diacyl-sn-glycerol + ATP = a 1,2-diacyl-sn-glycero-3-phosphate + ADP + H(+)</text>
        <dbReference type="Rhea" id="RHEA:10272"/>
        <dbReference type="ChEBI" id="CHEBI:15378"/>
        <dbReference type="ChEBI" id="CHEBI:17815"/>
        <dbReference type="ChEBI" id="CHEBI:30616"/>
        <dbReference type="ChEBI" id="CHEBI:58608"/>
        <dbReference type="ChEBI" id="CHEBI:456216"/>
        <dbReference type="EC" id="2.7.1.107"/>
    </reaction>
</comment>
<comment type="catalytic activity">
    <reaction evidence="5 6">
        <text>1,2-di-(9Z-octadecenoyl)-sn-glycerol + ATP = 1,2-di-(9Z-octadecenoyl)-sn-glycero-3-phosphate + ADP + H(+)</text>
        <dbReference type="Rhea" id="RHEA:40327"/>
        <dbReference type="ChEBI" id="CHEBI:15378"/>
        <dbReference type="ChEBI" id="CHEBI:30616"/>
        <dbReference type="ChEBI" id="CHEBI:52333"/>
        <dbReference type="ChEBI" id="CHEBI:74546"/>
        <dbReference type="ChEBI" id="CHEBI:456216"/>
    </reaction>
    <physiologicalReaction direction="left-to-right" evidence="10">
        <dbReference type="Rhea" id="RHEA:40328"/>
    </physiologicalReaction>
</comment>
<comment type="activity regulation">
    <text evidence="5">Inhibited in response to H(2)O(2).</text>
</comment>
<comment type="pathway">
    <text evidence="9">Lipid metabolism; glycerolipid metabolism.</text>
</comment>
<comment type="subunit">
    <text evidence="5">Does not form homooligomers.</text>
</comment>
<comment type="subcellular location">
    <subcellularLocation>
        <location evidence="5">Cell membrane</location>
        <topology evidence="5">Peripheral membrane protein</topology>
    </subcellularLocation>
</comment>
<comment type="tissue specificity">
    <text evidence="5">Expressed in testis, and to a lesser extent in placenta.</text>
</comment>
<comment type="PTM">
    <text evidence="5">Phosphorylated at Tyr-78 by some member of the SRC family in response to H(2)O(2).</text>
</comment>
<comment type="similarity">
    <text evidence="8">Belongs to the eukaryotic diacylglycerol kinase family.</text>
</comment>
<reference key="1">
    <citation type="journal article" date="2005" name="J. Biol. Chem.">
        <title>Identification and characterization of a novel human type II diacylglycerol kinase, DGK kappa.</title>
        <authorList>
            <person name="Imai S."/>
            <person name="Kai M."/>
            <person name="Yasuda S."/>
            <person name="Kanoh H."/>
            <person name="Sakane F."/>
        </authorList>
    </citation>
    <scope>NUCLEOTIDE SEQUENCE [MRNA]</scope>
    <scope>FUNCTION</scope>
    <scope>CATALYTIC ACTIVITY</scope>
    <scope>ACTIVITY REGULATION</scope>
    <scope>SUBUNIT</scope>
    <scope>SUBCELLULAR LOCATION</scope>
    <scope>TISSUE SPECIFICITY</scope>
    <scope>PHOSPHORYLATION AT TYR-78</scope>
    <scope>MUTAGENESIS OF TYR-78 AND TYR-1075</scope>
    <scope>REGION</scope>
</reference>
<reference key="2">
    <citation type="journal article" date="2004" name="Genome Res.">
        <title>The status, quality, and expansion of the NIH full-length cDNA project: the Mammalian Gene Collection (MGC).</title>
        <authorList>
            <consortium name="The MGC Project Team"/>
        </authorList>
    </citation>
    <scope>NUCLEOTIDE SEQUENCE [LARGE SCALE MRNA]</scope>
</reference>
<reference key="3">
    <citation type="journal article" date="2013" name="Pharmacology">
        <title>Evaluations of the selectivities of the diacylglycerol kinase inhibitors R59022 and R59949 among diacylglycerol kinase isozymes using a new non-radioactive assay method.</title>
        <authorList>
            <person name="Sato M."/>
            <person name="Liu K."/>
            <person name="Sasaki S."/>
            <person name="Kunii N."/>
            <person name="Sakai H."/>
            <person name="Mizuno H."/>
            <person name="Saga H."/>
            <person name="Sakane F."/>
        </authorList>
    </citation>
    <scope>CATALYTIC ACTIVITY</scope>
</reference>
<proteinExistence type="evidence at protein level"/>
<gene>
    <name evidence="11" type="primary">DGKK</name>
</gene>
<dbReference type="EC" id="2.7.1.107" evidence="5 6"/>
<dbReference type="EMBL" id="AB183864">
    <property type="protein sequence ID" value="BAD86792.1"/>
    <property type="molecule type" value="mRNA"/>
</dbReference>
<dbReference type="EMBL" id="BC137319">
    <property type="protein sequence ID" value="AAI37320.1"/>
    <property type="molecule type" value="mRNA"/>
</dbReference>
<dbReference type="EMBL" id="BC137320">
    <property type="protein sequence ID" value="AAI37321.1"/>
    <property type="molecule type" value="mRNA"/>
</dbReference>
<dbReference type="CCDS" id="CCDS75980.1"/>
<dbReference type="RefSeq" id="NP_001013764.1">
    <property type="nucleotide sequence ID" value="NM_001013742.4"/>
</dbReference>
<dbReference type="SMR" id="Q5KSL6"/>
<dbReference type="BioGRID" id="126548">
    <property type="interactions" value="6"/>
</dbReference>
<dbReference type="FunCoup" id="Q5KSL6">
    <property type="interactions" value="368"/>
</dbReference>
<dbReference type="IntAct" id="Q5KSL6">
    <property type="interactions" value="2"/>
</dbReference>
<dbReference type="STRING" id="9606.ENSP00000477515"/>
<dbReference type="BindingDB" id="Q5KSL6"/>
<dbReference type="ChEMBL" id="CHEMBL5465316"/>
<dbReference type="DrugBank" id="DB14001">
    <property type="generic name" value="alpha-Tocopherol succinate"/>
</dbReference>
<dbReference type="SwissLipids" id="SLP:000000926"/>
<dbReference type="GlyGen" id="Q5KSL6">
    <property type="glycosylation" value="3 sites, 1 O-linked glycan (1 site)"/>
</dbReference>
<dbReference type="iPTMnet" id="Q5KSL6"/>
<dbReference type="PhosphoSitePlus" id="Q5KSL6"/>
<dbReference type="BioMuta" id="DGKK"/>
<dbReference type="DMDM" id="74708075"/>
<dbReference type="jPOST" id="Q5KSL6"/>
<dbReference type="MassIVE" id="Q5KSL6"/>
<dbReference type="PaxDb" id="9606-ENSP00000477515"/>
<dbReference type="PeptideAtlas" id="Q5KSL6"/>
<dbReference type="ProteomicsDB" id="63549"/>
<dbReference type="Antibodypedia" id="72568">
    <property type="antibodies" value="128 antibodies from 22 providers"/>
</dbReference>
<dbReference type="DNASU" id="139189"/>
<dbReference type="Ensembl" id="ENST00000611977.2">
    <property type="protein sequence ID" value="ENSP00000477515.1"/>
    <property type="gene ID" value="ENSG00000274588.2"/>
</dbReference>
<dbReference type="GeneID" id="139189"/>
<dbReference type="KEGG" id="hsa:139189"/>
<dbReference type="MANE-Select" id="ENST00000611977.2">
    <property type="protein sequence ID" value="ENSP00000477515.1"/>
    <property type="RefSeq nucleotide sequence ID" value="NM_001013742.4"/>
    <property type="RefSeq protein sequence ID" value="NP_001013764.1"/>
</dbReference>
<dbReference type="UCSC" id="uc033edr.2">
    <property type="organism name" value="human"/>
</dbReference>
<dbReference type="AGR" id="HGNC:32395"/>
<dbReference type="CTD" id="139189"/>
<dbReference type="DisGeNET" id="139189"/>
<dbReference type="GeneCards" id="DGKK"/>
<dbReference type="HGNC" id="HGNC:32395">
    <property type="gene designation" value="DGKK"/>
</dbReference>
<dbReference type="HPA" id="ENSG00000274588">
    <property type="expression patterns" value="Group enriched (adrenal gland, brain, pituitary gland)"/>
</dbReference>
<dbReference type="MIM" id="300837">
    <property type="type" value="gene"/>
</dbReference>
<dbReference type="neXtProt" id="NX_Q5KSL6"/>
<dbReference type="OpenTargets" id="ENSG00000274588"/>
<dbReference type="PharmGKB" id="PA142671978"/>
<dbReference type="VEuPathDB" id="HostDB:ENSG00000274588"/>
<dbReference type="eggNOG" id="KOG1170">
    <property type="taxonomic scope" value="Eukaryota"/>
</dbReference>
<dbReference type="GeneTree" id="ENSGT00940000162262"/>
<dbReference type="HOGENOM" id="CLU_001799_3_3_1"/>
<dbReference type="InParanoid" id="Q5KSL6"/>
<dbReference type="OMA" id="ECKHTEI"/>
<dbReference type="OrthoDB" id="196165at2759"/>
<dbReference type="PAN-GO" id="Q5KSL6">
    <property type="GO annotations" value="4 GO annotations based on evolutionary models"/>
</dbReference>
<dbReference type="PhylomeDB" id="Q5KSL6"/>
<dbReference type="BRENDA" id="2.7.1.107">
    <property type="organism ID" value="2681"/>
</dbReference>
<dbReference type="PathwayCommons" id="Q5KSL6"/>
<dbReference type="Reactome" id="R-HSA-114508">
    <property type="pathway name" value="Effects of PIP2 hydrolysis"/>
</dbReference>
<dbReference type="SignaLink" id="Q5KSL6"/>
<dbReference type="UniPathway" id="UPA00230"/>
<dbReference type="BioGRID-ORCS" id="139189">
    <property type="hits" value="10 hits in 272 CRISPR screens"/>
</dbReference>
<dbReference type="ChiTaRS" id="DGKK">
    <property type="organism name" value="human"/>
</dbReference>
<dbReference type="GenomeRNAi" id="139189"/>
<dbReference type="Pharos" id="Q5KSL6">
    <property type="development level" value="Tbio"/>
</dbReference>
<dbReference type="PRO" id="PR:Q5KSL6"/>
<dbReference type="Proteomes" id="UP000005640">
    <property type="component" value="Chromosome X"/>
</dbReference>
<dbReference type="RNAct" id="Q5KSL6">
    <property type="molecule type" value="protein"/>
</dbReference>
<dbReference type="Bgee" id="ENSG00000274588">
    <property type="expression patterns" value="Expressed in male germ line stem cell (sensu Vertebrata) in testis and 33 other cell types or tissues"/>
</dbReference>
<dbReference type="GO" id="GO:0005886">
    <property type="term" value="C:plasma membrane"/>
    <property type="evidence" value="ECO:0000314"/>
    <property type="project" value="HGNC-UCL"/>
</dbReference>
<dbReference type="GO" id="GO:0005524">
    <property type="term" value="F:ATP binding"/>
    <property type="evidence" value="ECO:0007669"/>
    <property type="project" value="UniProtKB-KW"/>
</dbReference>
<dbReference type="GO" id="GO:0004143">
    <property type="term" value="F:ATP-dependent diacylglycerol kinase activity"/>
    <property type="evidence" value="ECO:0000314"/>
    <property type="project" value="HGNC-UCL"/>
</dbReference>
<dbReference type="GO" id="GO:0008270">
    <property type="term" value="F:zinc ion binding"/>
    <property type="evidence" value="ECO:0007669"/>
    <property type="project" value="UniProtKB-KW"/>
</dbReference>
<dbReference type="GO" id="GO:0046339">
    <property type="term" value="P:diacylglycerol metabolic process"/>
    <property type="evidence" value="ECO:0000314"/>
    <property type="project" value="HGNC-UCL"/>
</dbReference>
<dbReference type="GO" id="GO:0035556">
    <property type="term" value="P:intracellular signal transduction"/>
    <property type="evidence" value="ECO:0000314"/>
    <property type="project" value="HGNC-UCL"/>
</dbReference>
<dbReference type="GO" id="GO:0006654">
    <property type="term" value="P:phosphatidic acid biosynthetic process"/>
    <property type="evidence" value="ECO:0000318"/>
    <property type="project" value="GO_Central"/>
</dbReference>
<dbReference type="GO" id="GO:0007200">
    <property type="term" value="P:phospholipase C-activating G protein-coupled receptor signaling pathway"/>
    <property type="evidence" value="ECO:0007669"/>
    <property type="project" value="InterPro"/>
</dbReference>
<dbReference type="GO" id="GO:0030168">
    <property type="term" value="P:platelet activation"/>
    <property type="evidence" value="ECO:0000304"/>
    <property type="project" value="Reactome"/>
</dbReference>
<dbReference type="GO" id="GO:0006979">
    <property type="term" value="P:response to oxidative stress"/>
    <property type="evidence" value="ECO:0000314"/>
    <property type="project" value="HGNC-UCL"/>
</dbReference>
<dbReference type="CDD" id="cd20800">
    <property type="entry name" value="C1_DGK_typeII_rpt1"/>
    <property type="match status" value="1"/>
</dbReference>
<dbReference type="CDD" id="cd20852">
    <property type="entry name" value="C1_DGK_typeII_rpt2"/>
    <property type="match status" value="1"/>
</dbReference>
<dbReference type="CDD" id="cd13274">
    <property type="entry name" value="PH_DGK_type2"/>
    <property type="match status" value="1"/>
</dbReference>
<dbReference type="FunFam" id="2.30.29.30:FF:000320">
    <property type="entry name" value="Diacylglycerol kinase"/>
    <property type="match status" value="1"/>
</dbReference>
<dbReference type="FunFam" id="2.60.200.40:FF:000001">
    <property type="entry name" value="Diacylglycerol kinase"/>
    <property type="match status" value="1"/>
</dbReference>
<dbReference type="FunFam" id="3.30.60.20:FF:000002">
    <property type="entry name" value="Diacylglycerol kinase"/>
    <property type="match status" value="1"/>
</dbReference>
<dbReference type="FunFam" id="3.30.60.20:FF:000054">
    <property type="entry name" value="Diacylglycerol kinase"/>
    <property type="match status" value="1"/>
</dbReference>
<dbReference type="FunFam" id="3.40.50.10330:FF:000024">
    <property type="entry name" value="Diacylglycerol kinase"/>
    <property type="match status" value="1"/>
</dbReference>
<dbReference type="Gene3D" id="2.60.200.40">
    <property type="match status" value="1"/>
</dbReference>
<dbReference type="Gene3D" id="3.30.60.20">
    <property type="match status" value="2"/>
</dbReference>
<dbReference type="Gene3D" id="2.30.29.30">
    <property type="entry name" value="Pleckstrin-homology domain (PH domain)/Phosphotyrosine-binding domain (PTB)"/>
    <property type="match status" value="1"/>
</dbReference>
<dbReference type="Gene3D" id="3.40.50.10330">
    <property type="entry name" value="Probable inorganic polyphosphate/atp-NAD kinase, domain 1"/>
    <property type="match status" value="1"/>
</dbReference>
<dbReference type="InterPro" id="IPR017438">
    <property type="entry name" value="ATP-NAD_kinase_N"/>
</dbReference>
<dbReference type="InterPro" id="IPR046349">
    <property type="entry name" value="C1-like_sf"/>
</dbReference>
<dbReference type="InterPro" id="IPR037607">
    <property type="entry name" value="DGK"/>
</dbReference>
<dbReference type="InterPro" id="IPR054474">
    <property type="entry name" value="DGKD_4H"/>
</dbReference>
<dbReference type="InterPro" id="IPR000756">
    <property type="entry name" value="Diacylglycerol_kin_accessory"/>
</dbReference>
<dbReference type="InterPro" id="IPR001206">
    <property type="entry name" value="Diacylglycerol_kinase_cat_dom"/>
</dbReference>
<dbReference type="InterPro" id="IPR016064">
    <property type="entry name" value="NAD/diacylglycerol_kinase_sf"/>
</dbReference>
<dbReference type="InterPro" id="IPR002219">
    <property type="entry name" value="PE/DAG-bd"/>
</dbReference>
<dbReference type="InterPro" id="IPR011993">
    <property type="entry name" value="PH-like_dom_sf"/>
</dbReference>
<dbReference type="InterPro" id="IPR001849">
    <property type="entry name" value="PH_domain"/>
</dbReference>
<dbReference type="PANTHER" id="PTHR11255">
    <property type="entry name" value="DIACYLGLYCEROL KINASE"/>
    <property type="match status" value="1"/>
</dbReference>
<dbReference type="PANTHER" id="PTHR11255:SF33">
    <property type="entry name" value="DIACYLGLYCEROL KINASE KAPPA"/>
    <property type="match status" value="1"/>
</dbReference>
<dbReference type="Pfam" id="PF00130">
    <property type="entry name" value="C1_1"/>
    <property type="match status" value="1"/>
</dbReference>
<dbReference type="Pfam" id="PF00609">
    <property type="entry name" value="DAGK_acc"/>
    <property type="match status" value="1"/>
</dbReference>
<dbReference type="Pfam" id="PF00781">
    <property type="entry name" value="DAGK_cat"/>
    <property type="match status" value="1"/>
</dbReference>
<dbReference type="Pfam" id="PF22944">
    <property type="entry name" value="DGKD_4H"/>
    <property type="match status" value="1"/>
</dbReference>
<dbReference type="Pfam" id="PF00169">
    <property type="entry name" value="PH"/>
    <property type="match status" value="1"/>
</dbReference>
<dbReference type="SMART" id="SM00109">
    <property type="entry name" value="C1"/>
    <property type="match status" value="2"/>
</dbReference>
<dbReference type="SMART" id="SM00045">
    <property type="entry name" value="DAGKa"/>
    <property type="match status" value="1"/>
</dbReference>
<dbReference type="SMART" id="SM00046">
    <property type="entry name" value="DAGKc"/>
    <property type="match status" value="1"/>
</dbReference>
<dbReference type="SMART" id="SM00233">
    <property type="entry name" value="PH"/>
    <property type="match status" value="1"/>
</dbReference>
<dbReference type="SUPFAM" id="SSF57889">
    <property type="entry name" value="Cysteine-rich domain"/>
    <property type="match status" value="2"/>
</dbReference>
<dbReference type="SUPFAM" id="SSF111331">
    <property type="entry name" value="NAD kinase/diacylglycerol kinase-like"/>
    <property type="match status" value="1"/>
</dbReference>
<dbReference type="SUPFAM" id="SSF50729">
    <property type="entry name" value="PH domain-like"/>
    <property type="match status" value="1"/>
</dbReference>
<dbReference type="PROSITE" id="PS50146">
    <property type="entry name" value="DAGK"/>
    <property type="match status" value="1"/>
</dbReference>
<dbReference type="PROSITE" id="PS50003">
    <property type="entry name" value="PH_DOMAIN"/>
    <property type="match status" value="1"/>
</dbReference>
<dbReference type="PROSITE" id="PS00479">
    <property type="entry name" value="ZF_DAG_PE_1"/>
    <property type="match status" value="2"/>
</dbReference>
<dbReference type="PROSITE" id="PS50081">
    <property type="entry name" value="ZF_DAG_PE_2"/>
    <property type="match status" value="2"/>
</dbReference>
<protein>
    <recommendedName>
        <fullName evidence="9">Diacylglycerol kinase kappa</fullName>
        <shortName evidence="8">DAG kinase kappa</shortName>
        <shortName evidence="7">DGK-kappa</shortName>
        <ecNumber evidence="5 6">2.7.1.107</ecNumber>
    </recommendedName>
    <alternativeName>
        <fullName evidence="7">142 kDa diacylglycerol kinase</fullName>
    </alternativeName>
    <alternativeName>
        <fullName>Diglyceride kinase kappa</fullName>
    </alternativeName>
</protein>
<name>DGKK_HUMAN</name>
<evidence type="ECO:0000255" key="1">
    <source>
        <dbReference type="PROSITE-ProRule" id="PRU00145"/>
    </source>
</evidence>
<evidence type="ECO:0000255" key="2">
    <source>
        <dbReference type="PROSITE-ProRule" id="PRU00226"/>
    </source>
</evidence>
<evidence type="ECO:0000255" key="3">
    <source>
        <dbReference type="PROSITE-ProRule" id="PRU00783"/>
    </source>
</evidence>
<evidence type="ECO:0000256" key="4">
    <source>
        <dbReference type="SAM" id="MobiDB-lite"/>
    </source>
</evidence>
<evidence type="ECO:0000269" key="5">
    <source>
    </source>
</evidence>
<evidence type="ECO:0000269" key="6">
    <source>
    </source>
</evidence>
<evidence type="ECO:0000303" key="7">
    <source>
    </source>
</evidence>
<evidence type="ECO:0000305" key="8"/>
<evidence type="ECO:0000305" key="9">
    <source>
    </source>
</evidence>
<evidence type="ECO:0000305" key="10">
    <source>
    </source>
</evidence>
<evidence type="ECO:0000312" key="11">
    <source>
        <dbReference type="HGNC" id="HGNC:32395"/>
    </source>
</evidence>
<feature type="chain" id="PRO_0000239368" description="Diacylglycerol kinase kappa">
    <location>
        <begin position="1"/>
        <end position="1271"/>
    </location>
</feature>
<feature type="repeat" description="1">
    <location>
        <begin position="48"/>
        <end position="51"/>
    </location>
</feature>
<feature type="repeat" description="2">
    <location>
        <begin position="52"/>
        <end position="55"/>
    </location>
</feature>
<feature type="repeat" description="3">
    <location>
        <begin position="56"/>
        <end position="59"/>
    </location>
</feature>
<feature type="repeat" description="4">
    <location>
        <begin position="60"/>
        <end position="63"/>
    </location>
</feature>
<feature type="repeat" description="5">
    <location>
        <begin position="64"/>
        <end position="67"/>
    </location>
</feature>
<feature type="repeat" description="6">
    <location>
        <begin position="68"/>
        <end position="71"/>
    </location>
</feature>
<feature type="repeat" description="7">
    <location>
        <begin position="72"/>
        <end position="75"/>
    </location>
</feature>
<feature type="repeat" description="8">
    <location>
        <begin position="76"/>
        <end position="79"/>
    </location>
</feature>
<feature type="repeat" description="9">
    <location>
        <begin position="80"/>
        <end position="83"/>
    </location>
</feature>
<feature type="repeat" description="10">
    <location>
        <begin position="84"/>
        <end position="87"/>
    </location>
</feature>
<feature type="repeat" description="11">
    <location>
        <begin position="88"/>
        <end position="91"/>
    </location>
</feature>
<feature type="repeat" description="12">
    <location>
        <begin position="92"/>
        <end position="95"/>
    </location>
</feature>
<feature type="repeat" description="13">
    <location>
        <begin position="96"/>
        <end position="99"/>
    </location>
</feature>
<feature type="repeat" description="14">
    <location>
        <begin position="100"/>
        <end position="103"/>
    </location>
</feature>
<feature type="repeat" description="15">
    <location>
        <begin position="104"/>
        <end position="107"/>
    </location>
</feature>
<feature type="repeat" description="16">
    <location>
        <begin position="108"/>
        <end position="111"/>
    </location>
</feature>
<feature type="repeat" description="17">
    <location>
        <begin position="112"/>
        <end position="115"/>
    </location>
</feature>
<feature type="repeat" description="18">
    <location>
        <begin position="116"/>
        <end position="119"/>
    </location>
</feature>
<feature type="repeat" description="19">
    <location>
        <begin position="120"/>
        <end position="123"/>
    </location>
</feature>
<feature type="repeat" description="20">
    <location>
        <begin position="124"/>
        <end position="127"/>
    </location>
</feature>
<feature type="repeat" description="21">
    <location>
        <begin position="128"/>
        <end position="131"/>
    </location>
</feature>
<feature type="repeat" description="22">
    <location>
        <begin position="132"/>
        <end position="135"/>
    </location>
</feature>
<feature type="repeat" description="23">
    <location>
        <begin position="136"/>
        <end position="139"/>
    </location>
</feature>
<feature type="repeat" description="24">
    <location>
        <begin position="140"/>
        <end position="143"/>
    </location>
</feature>
<feature type="repeat" description="25">
    <location>
        <begin position="144"/>
        <end position="147"/>
    </location>
</feature>
<feature type="repeat" description="26">
    <location>
        <begin position="148"/>
        <end position="151"/>
    </location>
</feature>
<feature type="repeat" description="27">
    <location>
        <begin position="152"/>
        <end position="155"/>
    </location>
</feature>
<feature type="repeat" description="28">
    <location>
        <begin position="156"/>
        <end position="159"/>
    </location>
</feature>
<feature type="repeat" description="29">
    <location>
        <begin position="160"/>
        <end position="163"/>
    </location>
</feature>
<feature type="repeat" description="30">
    <location>
        <begin position="164"/>
        <end position="167"/>
    </location>
</feature>
<feature type="repeat" description="31">
    <location>
        <begin position="168"/>
        <end position="171"/>
    </location>
</feature>
<feature type="repeat" description="32">
    <location>
        <begin position="172"/>
        <end position="175"/>
    </location>
</feature>
<feature type="repeat" description="33">
    <location>
        <begin position="176"/>
        <end position="179"/>
    </location>
</feature>
<feature type="domain" description="PH" evidence="1">
    <location>
        <begin position="216"/>
        <end position="309"/>
    </location>
</feature>
<feature type="domain" description="DAGKc" evidence="3">
    <location>
        <begin position="487"/>
        <end position="622"/>
    </location>
</feature>
<feature type="zinc finger region" description="Phorbol-ester/DAG-type 1" evidence="2">
    <location>
        <begin position="327"/>
        <end position="377"/>
    </location>
</feature>
<feature type="zinc finger region" description="Phorbol-ester/DAG-type 2" evidence="2">
    <location>
        <begin position="398"/>
        <end position="449"/>
    </location>
</feature>
<feature type="region of interest" description="Disordered" evidence="4">
    <location>
        <begin position="1"/>
        <end position="160"/>
    </location>
</feature>
<feature type="region of interest" description="33 X 4 AA approximate tandem repeats of E-P-A-P">
    <location>
        <begin position="48"/>
        <end position="179"/>
    </location>
</feature>
<feature type="region of interest" description="Disordered" evidence="4">
    <location>
        <begin position="190"/>
        <end position="209"/>
    </location>
</feature>
<feature type="region of interest" description="Disordered" evidence="4">
    <location>
        <begin position="805"/>
        <end position="825"/>
    </location>
</feature>
<feature type="region of interest" description="Required for localization to the plasma membrane" evidence="5">
    <location>
        <begin position="1199"/>
        <end position="1268"/>
    </location>
</feature>
<feature type="region of interest" description="Disordered" evidence="4">
    <location>
        <begin position="1252"/>
        <end position="1271"/>
    </location>
</feature>
<feature type="compositionally biased region" description="Low complexity" evidence="4">
    <location>
        <begin position="1"/>
        <end position="15"/>
    </location>
</feature>
<feature type="compositionally biased region" description="Pro residues" evidence="4">
    <location>
        <begin position="23"/>
        <end position="44"/>
    </location>
</feature>
<feature type="compositionally biased region" description="Pro residues" evidence="4">
    <location>
        <begin position="52"/>
        <end position="66"/>
    </location>
</feature>
<feature type="compositionally biased region" description="Pro residues" evidence="4">
    <location>
        <begin position="82"/>
        <end position="116"/>
    </location>
</feature>
<feature type="compositionally biased region" description="Low complexity" evidence="4">
    <location>
        <begin position="139"/>
        <end position="149"/>
    </location>
</feature>
<feature type="modified residue" description="Phosphotyrosine" evidence="5">
    <location>
        <position position="78"/>
    </location>
</feature>
<feature type="sequence variant" id="VAR_048859" description="In dbSNP:rs4074320.">
    <original>D</original>
    <variation>N</variation>
    <location>
        <position position="1118"/>
    </location>
</feature>
<feature type="mutagenesis site" description="Induces a strong reduction in phosphorylation but is still sensitive to H(2)O(2)." evidence="5">
    <original>Y</original>
    <variation>F</variation>
    <location>
        <position position="78"/>
    </location>
</feature>
<feature type="mutagenesis site" description="Does not affect phosphorylation." evidence="5">
    <original>Y</original>
    <variation>F</variation>
    <location>
        <position position="1075"/>
    </location>
</feature>
<sequence>MDRGAAAAQGTAPPQDGEQPAESPEPPPPWPPPPPPPAPPPAPPLLSEASPEPIPEPCPELAPGPCPEATSESATELYTEPTPEPATEPASEPAPEPATEPAPEPATEPAPEPAPEPATESAPEPTPEPALESVPEPAPELTPEVAPELAPEPTPEPVTELAPEFCPEAAPEFRPSPAPCLLQCPVDTRERGLKTSPSPSPSPSPRTPMSWSRIKKILKEGPMLKNCNSFKRWKLRYFLVQGQKLYFAHHPAFAHFETIDLSQATVAESSCRNLCHSFCVITPQRKITLAAPNRKDMEEWINIIKTIQQGEIYKIPAAENNPFLVGMHCWYSSYSHRTQHCNVCRESIPALSRDAIICEVCKVKSHRLCALRASKDCKWNTLSITDDLLLPADEVNMPHQWVEGNMPVSSQCAVCHESCGSYQRLQDFRCLWCNSTVHDDCRRRFSKECCFRSHRSSVIPPTALSDPKGDGQLVVSSDFWNLDWSSACSCPLLIFINSKSGDHQGIVFLRKFKQYLNPSQVFDLLKGGPEAGLSMFKNFARFRILVCGGDGSVSWVLSLIDAFGLHEKCQLAVIPLGTGNDLARVLGWGAFWNKSKSPLDILNRVEQASVRILDRWSVMIRETPRQTPLLKGQVEMDVPRFEAAAIQHLESAATELNKILKAKYPTEMIIATRFLCSAVEDFVVDIVKAWGQIKQNNTAIVSVILKSDLMYDRLSVLIDVLAEEAAATSAEKSATEYADSSKADRKPFIPQIDHIAKCKLELATKAQSLQKSLKLIIFQVEQALDEESRQTISVKNFSSTFFLEDDPEDINQTSPRRRSRRGTLSSISSLKSEDLDNLNLDHLHFTPESIRFKEKCVMNNYFGIGLDAKISLDFNTRRDEHPGQYNSRLKNKMWYGLLGTKELLQRSYRKLEERVHLECDGETISLPNLQGIVVLNITSYAGGINFWGSNTATTEYEAPAIDDGKLEVVAIFGSVQMAMSRIINLHHHRIAQCHEVMITIDGEEGIPVQVDGEAWIQRPGLIKIRYKNAAQMLTRDRDFENSMKMWEYKHTEIQAAPQPQLDFQDSQESLSDEEYAQMQHLARLAENLISKLNDLSKIHQHVSVLMGSVNASANILNDIFYGQDSGNEMGAASCIPIETLSRNDAVDVTFSLKGLYDDTTAFLDEKLLRSAEDETALQSALDAMNKEFKKLSEIDWMNPIFVPEEKSSDTDSRSLRLKIKFPKLGKKKVEEERKPKSGQSVQSFIGNLWHRRHREDEAEGDDPLTPSRSQL</sequence>